<accession>C3MY47</accession>
<protein>
    <recommendedName>
        <fullName evidence="1">Proteasome-activating nucleotidase</fullName>
        <shortName evidence="1">PAN</shortName>
    </recommendedName>
    <alternativeName>
        <fullName evidence="1">Proteasomal ATPase</fullName>
    </alternativeName>
    <alternativeName>
        <fullName evidence="1">Proteasome regulatory ATPase</fullName>
    </alternativeName>
    <alternativeName>
        <fullName evidence="1">Proteasome regulatory particle</fullName>
    </alternativeName>
</protein>
<dbReference type="EMBL" id="CP001400">
    <property type="protein sequence ID" value="ACP38604.1"/>
    <property type="molecule type" value="Genomic_DNA"/>
</dbReference>
<dbReference type="RefSeq" id="WP_012711834.1">
    <property type="nucleotide sequence ID" value="NC_012588.1"/>
</dbReference>
<dbReference type="SMR" id="C3MY47"/>
<dbReference type="KEGG" id="sia:M1425_1860"/>
<dbReference type="HOGENOM" id="CLU_000688_2_0_2"/>
<dbReference type="Proteomes" id="UP000001350">
    <property type="component" value="Chromosome"/>
</dbReference>
<dbReference type="GO" id="GO:0005737">
    <property type="term" value="C:cytoplasm"/>
    <property type="evidence" value="ECO:0007669"/>
    <property type="project" value="UniProtKB-SubCell"/>
</dbReference>
<dbReference type="GO" id="GO:0022623">
    <property type="term" value="C:proteasome-activating nucleotidase complex"/>
    <property type="evidence" value="ECO:0007669"/>
    <property type="project" value="UniProtKB-UniRule"/>
</dbReference>
<dbReference type="GO" id="GO:0005524">
    <property type="term" value="F:ATP binding"/>
    <property type="evidence" value="ECO:0007669"/>
    <property type="project" value="UniProtKB-UniRule"/>
</dbReference>
<dbReference type="GO" id="GO:0016887">
    <property type="term" value="F:ATP hydrolysis activity"/>
    <property type="evidence" value="ECO:0007669"/>
    <property type="project" value="UniProtKB-UniRule"/>
</dbReference>
<dbReference type="GO" id="GO:0010498">
    <property type="term" value="P:proteasomal protein catabolic process"/>
    <property type="evidence" value="ECO:0007669"/>
    <property type="project" value="UniProtKB-UniRule"/>
</dbReference>
<dbReference type="GO" id="GO:0043335">
    <property type="term" value="P:protein unfolding"/>
    <property type="evidence" value="ECO:0007669"/>
    <property type="project" value="UniProtKB-UniRule"/>
</dbReference>
<dbReference type="CDD" id="cd19502">
    <property type="entry name" value="RecA-like_PAN_like"/>
    <property type="match status" value="1"/>
</dbReference>
<dbReference type="FunFam" id="3.40.50.300:FF:000033">
    <property type="entry name" value="26S protease regulatory subunit 6B"/>
    <property type="match status" value="1"/>
</dbReference>
<dbReference type="FunFam" id="1.10.8.60:FF:000001">
    <property type="entry name" value="ATP-dependent zinc metalloprotease FtsH"/>
    <property type="match status" value="1"/>
</dbReference>
<dbReference type="Gene3D" id="1.10.8.60">
    <property type="match status" value="1"/>
</dbReference>
<dbReference type="Gene3D" id="2.40.50.140">
    <property type="entry name" value="Nucleic acid-binding proteins"/>
    <property type="match status" value="1"/>
</dbReference>
<dbReference type="Gene3D" id="3.40.50.300">
    <property type="entry name" value="P-loop containing nucleotide triphosphate hydrolases"/>
    <property type="match status" value="1"/>
</dbReference>
<dbReference type="HAMAP" id="MF_00553">
    <property type="entry name" value="PAN"/>
    <property type="match status" value="1"/>
</dbReference>
<dbReference type="InterPro" id="IPR050221">
    <property type="entry name" value="26S_Proteasome_ATPase"/>
</dbReference>
<dbReference type="InterPro" id="IPR003593">
    <property type="entry name" value="AAA+_ATPase"/>
</dbReference>
<dbReference type="InterPro" id="IPR041569">
    <property type="entry name" value="AAA_lid_3"/>
</dbReference>
<dbReference type="InterPro" id="IPR003959">
    <property type="entry name" value="ATPase_AAA_core"/>
</dbReference>
<dbReference type="InterPro" id="IPR003960">
    <property type="entry name" value="ATPase_AAA_CS"/>
</dbReference>
<dbReference type="InterPro" id="IPR012340">
    <property type="entry name" value="NA-bd_OB-fold"/>
</dbReference>
<dbReference type="InterPro" id="IPR023501">
    <property type="entry name" value="Nucleotidase_PAN"/>
</dbReference>
<dbReference type="InterPro" id="IPR027417">
    <property type="entry name" value="P-loop_NTPase"/>
</dbReference>
<dbReference type="InterPro" id="IPR032501">
    <property type="entry name" value="Prot_ATP_ID_OB_2nd"/>
</dbReference>
<dbReference type="NCBIfam" id="NF003069">
    <property type="entry name" value="PRK03992.1"/>
    <property type="match status" value="1"/>
</dbReference>
<dbReference type="NCBIfam" id="TIGR01242">
    <property type="entry name" value="proteasome-activating nucleotidase"/>
    <property type="match status" value="1"/>
</dbReference>
<dbReference type="PANTHER" id="PTHR23073">
    <property type="entry name" value="26S PROTEASOME REGULATORY SUBUNIT"/>
    <property type="match status" value="1"/>
</dbReference>
<dbReference type="Pfam" id="PF00004">
    <property type="entry name" value="AAA"/>
    <property type="match status" value="1"/>
</dbReference>
<dbReference type="Pfam" id="PF17862">
    <property type="entry name" value="AAA_lid_3"/>
    <property type="match status" value="1"/>
</dbReference>
<dbReference type="Pfam" id="PF16450">
    <property type="entry name" value="Prot_ATP_ID_OB_C"/>
    <property type="match status" value="1"/>
</dbReference>
<dbReference type="SMART" id="SM00382">
    <property type="entry name" value="AAA"/>
    <property type="match status" value="1"/>
</dbReference>
<dbReference type="SUPFAM" id="SSF52540">
    <property type="entry name" value="P-loop containing nucleoside triphosphate hydrolases"/>
    <property type="match status" value="1"/>
</dbReference>
<dbReference type="PROSITE" id="PS00674">
    <property type="entry name" value="AAA"/>
    <property type="match status" value="1"/>
</dbReference>
<proteinExistence type="inferred from homology"/>
<comment type="function">
    <text evidence="1">ATPase which is responsible for recognizing, binding, unfolding and translocation of substrate proteins into the archaeal 20S proteasome core particle. Is essential for opening the gate of the 20S proteasome via an interaction with its C-terminus, thereby allowing substrate entry and access to the site of proteolysis. Thus, the C-termini of the proteasomal ATPase function like a 'key in a lock' to induce gate opening and therefore regulate proteolysis. Unfolding activity requires energy from ATP hydrolysis, whereas ATP binding alone promotes ATPase-20S proteasome association which triggers gate opening, and supports translocation of unfolded substrates.</text>
</comment>
<comment type="subunit">
    <text evidence="1">Homohexamer. The hexameric complex has a two-ring architecture resembling a top hat that caps the 20S proteasome core at one or both ends. Upon ATP-binding, the C-terminus of PAN interacts with the alpha-rings of the proteasome core by binding to the intersubunit pockets.</text>
</comment>
<comment type="subcellular location">
    <subcellularLocation>
        <location evidence="1">Cytoplasm</location>
    </subcellularLocation>
</comment>
<comment type="domain">
    <text evidence="1">Consists of three main regions, an N-terminal coiled-coil domain that may assist in substrate recognition, an interdomain involved in PAN hexamerization, and a C-terminal ATPase domain of the AAA type.</text>
</comment>
<comment type="similarity">
    <text evidence="1">Belongs to the AAA ATPase family.</text>
</comment>
<evidence type="ECO:0000255" key="1">
    <source>
        <dbReference type="HAMAP-Rule" id="MF_00553"/>
    </source>
</evidence>
<name>PAN_SACI4</name>
<sequence>MSGDFDTIRDASSSDEVQLVRLLEEKIKSLQIEIENLRKELNYYKAEMEKMLSPPLIEAVVLDVLPDGRVLVRSSSGPNLVVNVASHIDQKLIKPGVSVALNQRGSTILEVLPQKEDPIVKTMEIVEKPNVTYSEIGGLEEQIKELREVVELPLKKPEIFREIGVEPPKGVLLYGPPGTGKTMLAKAVATESNAVFIHVVASEFAQKFVGEGARIVRELFEMAKRKAPSIIFIDEIDAIGAKRIDIGTSGEREIQRTLMQLLAELDGFNPLDNVKIIAATNRIDILDPALLRPGRFDRIIEVPLPDFRGRTEIFNIYLKKMKVEDNINLELLSQLSEGFSGADIKNVCVEAAYMAIRDGRNKVTMKDLVDAITKINVKRNNMESMKERREKYS</sequence>
<feature type="chain" id="PRO_1000212007" description="Proteasome-activating nucleotidase">
    <location>
        <begin position="1"/>
        <end position="393"/>
    </location>
</feature>
<feature type="region of interest" description="Docks into pockets in the proteasome alpha-ring to cause gate opening" evidence="1">
    <location>
        <begin position="391"/>
        <end position="393"/>
    </location>
</feature>
<feature type="coiled-coil region" evidence="1">
    <location>
        <begin position="14"/>
        <end position="53"/>
    </location>
</feature>
<feature type="binding site" evidence="1">
    <location>
        <begin position="178"/>
        <end position="183"/>
    </location>
    <ligand>
        <name>ATP</name>
        <dbReference type="ChEBI" id="CHEBI:30616"/>
    </ligand>
</feature>
<feature type="binding site" evidence="1">
    <location>
        <position position="317"/>
    </location>
    <ligand>
        <name>ATP</name>
        <dbReference type="ChEBI" id="CHEBI:30616"/>
    </ligand>
</feature>
<organism>
    <name type="scientific">Saccharolobus islandicus (strain M.14.25 / Kamchatka #1)</name>
    <name type="common">Sulfolobus islandicus</name>
    <dbReference type="NCBI Taxonomy" id="427317"/>
    <lineage>
        <taxon>Archaea</taxon>
        <taxon>Thermoproteota</taxon>
        <taxon>Thermoprotei</taxon>
        <taxon>Sulfolobales</taxon>
        <taxon>Sulfolobaceae</taxon>
        <taxon>Saccharolobus</taxon>
    </lineage>
</organism>
<gene>
    <name evidence="1" type="primary">pan</name>
    <name type="ordered locus">M1425_1860</name>
</gene>
<reference key="1">
    <citation type="journal article" date="2009" name="Proc. Natl. Acad. Sci. U.S.A.">
        <title>Biogeography of the Sulfolobus islandicus pan-genome.</title>
        <authorList>
            <person name="Reno M.L."/>
            <person name="Held N.L."/>
            <person name="Fields C.J."/>
            <person name="Burke P.V."/>
            <person name="Whitaker R.J."/>
        </authorList>
    </citation>
    <scope>NUCLEOTIDE SEQUENCE [LARGE SCALE GENOMIC DNA]</scope>
    <source>
        <strain>M.14.25 / Kamchatka #1</strain>
    </source>
</reference>
<keyword id="KW-0067">ATP-binding</keyword>
<keyword id="KW-0143">Chaperone</keyword>
<keyword id="KW-0175">Coiled coil</keyword>
<keyword id="KW-0963">Cytoplasm</keyword>
<keyword id="KW-0547">Nucleotide-binding</keyword>
<keyword id="KW-0647">Proteasome</keyword>